<comment type="function">
    <text evidence="2">Key enzyme in triglyceride metabolism (By similarity). Catalyzes the hydrolysis of triglycerides from circulating chylomicrons and very low density lipoproteins (VLDL), and thereby plays an important role in lipid clearance from the blood stream, lipid utilization and storage (By similarity). Although it has both phospholipase and triglyceride lipase activities it is primarily a triglyceride lipase with low but detectable phospholipase activity (By similarity). Mediates margination of triglyceride-rich lipoprotein particles in capillaries (By similarity). Recruited to its site of action on the luminal surface of vascular endothelium by binding to GPIHBP1 and cell surface heparan sulfate proteoglycans (By similarity).</text>
</comment>
<comment type="catalytic activity">
    <reaction evidence="3">
        <text>a triacylglycerol + H2O = a diacylglycerol + a fatty acid + H(+)</text>
        <dbReference type="Rhea" id="RHEA:12044"/>
        <dbReference type="ChEBI" id="CHEBI:15377"/>
        <dbReference type="ChEBI" id="CHEBI:15378"/>
        <dbReference type="ChEBI" id="CHEBI:17855"/>
        <dbReference type="ChEBI" id="CHEBI:18035"/>
        <dbReference type="ChEBI" id="CHEBI:28868"/>
        <dbReference type="EC" id="3.1.1.34"/>
    </reaction>
</comment>
<comment type="catalytic activity">
    <reaction evidence="2">
        <text>a 1,2-diacyl-sn-glycero-3-phosphocholine + H2O = a 2-acyl-sn-glycero-3-phosphocholine + a fatty acid + H(+)</text>
        <dbReference type="Rhea" id="RHEA:18689"/>
        <dbReference type="ChEBI" id="CHEBI:15377"/>
        <dbReference type="ChEBI" id="CHEBI:15378"/>
        <dbReference type="ChEBI" id="CHEBI:28868"/>
        <dbReference type="ChEBI" id="CHEBI:57643"/>
        <dbReference type="ChEBI" id="CHEBI:57875"/>
        <dbReference type="EC" id="3.1.1.32"/>
    </reaction>
</comment>
<comment type="catalytic activity">
    <reaction evidence="2">
        <text>1,2,3-tri-(9Z-octadecenoyl)-glycerol + H2O = di-(9Z)-octadecenoylglycerol + (9Z)-octadecenoate + H(+)</text>
        <dbReference type="Rhea" id="RHEA:38575"/>
        <dbReference type="ChEBI" id="CHEBI:15377"/>
        <dbReference type="ChEBI" id="CHEBI:15378"/>
        <dbReference type="ChEBI" id="CHEBI:30823"/>
        <dbReference type="ChEBI" id="CHEBI:53753"/>
        <dbReference type="ChEBI" id="CHEBI:75945"/>
    </reaction>
    <physiologicalReaction direction="left-to-right" evidence="2">
        <dbReference type="Rhea" id="RHEA:38576"/>
    </physiologicalReaction>
</comment>
<comment type="catalytic activity">
    <reaction evidence="2">
        <text>1,2-di-(9Z-octadecenoyl)-sn-glycero-3-phosphocholine + H2O = (9Z-octadecenoyl)-sn-glycero-3-phosphocholine + (9Z)-octadecenoate + H(+)</text>
        <dbReference type="Rhea" id="RHEA:38699"/>
        <dbReference type="ChEBI" id="CHEBI:15377"/>
        <dbReference type="ChEBI" id="CHEBI:15378"/>
        <dbReference type="ChEBI" id="CHEBI:30823"/>
        <dbReference type="ChEBI" id="CHEBI:74669"/>
        <dbReference type="ChEBI" id="CHEBI:76083"/>
    </reaction>
    <physiologicalReaction direction="left-to-right" evidence="2">
        <dbReference type="Rhea" id="RHEA:38700"/>
    </physiologicalReaction>
</comment>
<comment type="catalytic activity">
    <reaction evidence="2">
        <text>1,2,3-tributanoylglycerol + H2O = dibutanoylglycerol + butanoate + H(+)</text>
        <dbReference type="Rhea" id="RHEA:40475"/>
        <dbReference type="ChEBI" id="CHEBI:15377"/>
        <dbReference type="ChEBI" id="CHEBI:15378"/>
        <dbReference type="ChEBI" id="CHEBI:17968"/>
        <dbReference type="ChEBI" id="CHEBI:35020"/>
        <dbReference type="ChEBI" id="CHEBI:76478"/>
    </reaction>
    <physiologicalReaction direction="left-to-right" evidence="2">
        <dbReference type="Rhea" id="RHEA:40476"/>
    </physiologicalReaction>
</comment>
<comment type="catalytic activity">
    <reaction evidence="2">
        <text>1,2-dihexadecanoyl-sn-glycero-3-phosphocholine + H2O = hexadecanoyl-sn-glycero-3-phosphocholine + hexadecanoate + H(+)</text>
        <dbReference type="Rhea" id="RHEA:41384"/>
        <dbReference type="ChEBI" id="CHEBI:7896"/>
        <dbReference type="ChEBI" id="CHEBI:15377"/>
        <dbReference type="ChEBI" id="CHEBI:15378"/>
        <dbReference type="ChEBI" id="CHEBI:64563"/>
        <dbReference type="ChEBI" id="CHEBI:72999"/>
    </reaction>
    <physiologicalReaction direction="left-to-right" evidence="2">
        <dbReference type="Rhea" id="RHEA:41385"/>
    </physiologicalReaction>
</comment>
<comment type="activity regulation">
    <text evidence="2 3">The apolipoprotein APOC2 acts as a coactivator of LPL activity (By similarity). Ca(2+) binding promotes protein stability and formation of the active homodimer. Interaction with GPIHBP1 protects LPL against inactivation by ANGPTL4 (By similarity).</text>
</comment>
<comment type="subunit">
    <text evidence="2 3">Homodimer. Interacts with GPIHBP1 with 1:1 stoichiometry (By similarity). Interacts with APOC2; the interaction activates LPL activity in the presence of lipids (By similarity). Interaction with heparan sulfate proteoglycans is required to protect LPL against loss of activity. Associates with lipoprotein particles in blood plasma. Interacts with LMF1 and SEL1L; interaction with SEL1L is required to prevent aggregation of newly synthesized LPL in the endoplasmic reticulum (ER), and for normal export of LPL from the ER to the extracellular space (By similarity). Interacts with SORL1; SORL1 acts as a sorting receptor, promoting LPL localization to endosomes and later to lysosomes, leading to degradation of newly synthesized LPL (By similarity).</text>
</comment>
<comment type="subcellular location">
    <subcellularLocation>
        <location evidence="3">Cell membrane</location>
        <topology evidence="3">Peripheral membrane protein</topology>
        <orientation evidence="3">Extracellular side</orientation>
    </subcellularLocation>
    <subcellularLocation>
        <location evidence="3">Secreted</location>
    </subcellularLocation>
    <subcellularLocation>
        <location evidence="3">Secreted</location>
        <location evidence="3">Extracellular space</location>
        <location evidence="3">Extracellular matrix</location>
    </subcellularLocation>
    <text evidence="3">Newly synthesized LPL binds to cell surface heparan proteoglycans and is then released by heparanase. Subsequently, it becomes attached to heparan proteoglycan on endothelial cells. Locates to the plasma membrane of microvilli of hepatocytes with triglyceride-rich lipoproteins (TRL). Some of the bound LPL is then internalized and located inside non-coated endocytic vesicles.</text>
</comment>
<comment type="tissue specificity">
    <text evidence="7">Highest levels in the spinal cord.</text>
</comment>
<comment type="PTM">
    <text evidence="4">Tyrosine nitration after lipopolysaccharide (LPS) challenge down-regulates the lipase activity.</text>
</comment>
<comment type="similarity">
    <text evidence="8">Belongs to the AB hydrolase superfamily. Lipase family.</text>
</comment>
<gene>
    <name type="primary">LPL</name>
</gene>
<reference key="1">
    <citation type="journal article" date="1995" name="Gene">
        <title>Baboon lipoprotein lipase: cDNA sequence and variable tissue-specific expression of two transcripts.</title>
        <authorList>
            <person name="Cole S.A."/>
            <person name="Hixson J.E."/>
        </authorList>
    </citation>
    <scope>NUCLEOTIDE SEQUENCE [MRNA]</scope>
    <scope>TISSUE SPECIFICITY</scope>
    <source>
        <tissue>Heart muscle</tissue>
    </source>
</reference>
<protein>
    <recommendedName>
        <fullName>Lipoprotein lipase</fullName>
        <shortName>LPL</shortName>
        <ecNumber evidence="3">3.1.1.34</ecNumber>
    </recommendedName>
    <alternativeName>
        <fullName>Phospholipase A1</fullName>
        <ecNumber evidence="2">3.1.1.32</ecNumber>
    </alternativeName>
</protein>
<feature type="signal peptide" evidence="1">
    <location>
        <begin position="1"/>
        <end position="27"/>
    </location>
</feature>
<feature type="chain" id="PRO_0000017778" description="Lipoprotein lipase">
    <location>
        <begin position="28"/>
        <end position="475"/>
    </location>
</feature>
<feature type="domain" description="PLAT" evidence="6">
    <location>
        <begin position="341"/>
        <end position="464"/>
    </location>
</feature>
<feature type="region of interest" description="Interaction with GPIHBP1" evidence="2">
    <location>
        <begin position="32"/>
        <end position="53"/>
    </location>
</feature>
<feature type="region of interest" description="Essential for determining substrate specificity" evidence="2">
    <location>
        <begin position="243"/>
        <end position="266"/>
    </location>
</feature>
<feature type="region of interest" description="Important for interaction with lipoprotein particles" evidence="2">
    <location>
        <begin position="417"/>
        <end position="421"/>
    </location>
</feature>
<feature type="region of interest" description="Important for heparin binding" evidence="2">
    <location>
        <begin position="430"/>
        <end position="434"/>
    </location>
</feature>
<feature type="region of interest" description="Interaction with GPIHBP1" evidence="2">
    <location>
        <begin position="443"/>
        <end position="467"/>
    </location>
</feature>
<feature type="active site" description="Nucleophile">
    <location>
        <position position="159"/>
    </location>
</feature>
<feature type="active site" description="Charge relay system">
    <location>
        <position position="183"/>
    </location>
</feature>
<feature type="active site" description="Charge relay system">
    <location>
        <position position="268"/>
    </location>
</feature>
<feature type="binding site" evidence="2">
    <location>
        <position position="194"/>
    </location>
    <ligand>
        <name>Ca(2+)</name>
        <dbReference type="ChEBI" id="CHEBI:29108"/>
    </ligand>
</feature>
<feature type="binding site" evidence="2">
    <location>
        <position position="197"/>
    </location>
    <ligand>
        <name>Ca(2+)</name>
        <dbReference type="ChEBI" id="CHEBI:29108"/>
    </ligand>
</feature>
<feature type="binding site" evidence="2">
    <location>
        <position position="199"/>
    </location>
    <ligand>
        <name>Ca(2+)</name>
        <dbReference type="ChEBI" id="CHEBI:29108"/>
    </ligand>
</feature>
<feature type="binding site" evidence="2">
    <location>
        <position position="202"/>
    </location>
    <ligand>
        <name>Ca(2+)</name>
        <dbReference type="ChEBI" id="CHEBI:29108"/>
    </ligand>
</feature>
<feature type="modified residue" description="3'-nitrotyrosine" evidence="4">
    <location>
        <position position="121"/>
    </location>
</feature>
<feature type="modified residue" description="3'-nitrotyrosine" evidence="4">
    <location>
        <position position="191"/>
    </location>
</feature>
<feature type="modified residue" description="3'-nitrotyrosine" evidence="4">
    <location>
        <position position="343"/>
    </location>
</feature>
<feature type="glycosylation site" description="N-linked (GlcNAc...) asparagine" evidence="5">
    <location>
        <position position="70"/>
    </location>
</feature>
<feature type="glycosylation site" description="N-linked (GlcNAc...) asparagine" evidence="5">
    <location>
        <position position="386"/>
    </location>
</feature>
<feature type="disulfide bond" evidence="6">
    <location>
        <begin position="54"/>
        <end position="67"/>
    </location>
</feature>
<feature type="disulfide bond" evidence="6">
    <location>
        <begin position="243"/>
        <end position="266"/>
    </location>
</feature>
<feature type="disulfide bond" evidence="6">
    <location>
        <begin position="291"/>
        <end position="310"/>
    </location>
</feature>
<feature type="disulfide bond" evidence="6">
    <location>
        <begin position="302"/>
        <end position="305"/>
    </location>
</feature>
<feature type="disulfide bond" evidence="6">
    <location>
        <begin position="445"/>
        <end position="465"/>
    </location>
</feature>
<organism>
    <name type="scientific">Papio anubis</name>
    <name type="common">Olive baboon</name>
    <dbReference type="NCBI Taxonomy" id="9555"/>
    <lineage>
        <taxon>Eukaryota</taxon>
        <taxon>Metazoa</taxon>
        <taxon>Chordata</taxon>
        <taxon>Craniata</taxon>
        <taxon>Vertebrata</taxon>
        <taxon>Euteleostomi</taxon>
        <taxon>Mammalia</taxon>
        <taxon>Eutheria</taxon>
        <taxon>Euarchontoglires</taxon>
        <taxon>Primates</taxon>
        <taxon>Haplorrhini</taxon>
        <taxon>Catarrhini</taxon>
        <taxon>Cercopithecidae</taxon>
        <taxon>Cercopithecinae</taxon>
        <taxon>Papio</taxon>
    </lineage>
</organism>
<accession>P49060</accession>
<dbReference type="EC" id="3.1.1.34" evidence="3"/>
<dbReference type="EC" id="3.1.1.32" evidence="2"/>
<dbReference type="EMBL" id="U18091">
    <property type="protein sequence ID" value="AAC50199.1"/>
    <property type="molecule type" value="mRNA"/>
</dbReference>
<dbReference type="RefSeq" id="NP_001106082.1">
    <property type="nucleotide sequence ID" value="NM_001112612.1"/>
</dbReference>
<dbReference type="SMR" id="P49060"/>
<dbReference type="STRING" id="9555.ENSPANP00000015005"/>
<dbReference type="ESTHER" id="papan-lipli">
    <property type="family name" value="Lipoprotein_Lipase"/>
</dbReference>
<dbReference type="GlyCosmos" id="P49060">
    <property type="glycosylation" value="2 sites, No reported glycans"/>
</dbReference>
<dbReference type="Ensembl" id="ENSPANT00000075939.1">
    <property type="protein sequence ID" value="ENSPANP00000051087.1"/>
    <property type="gene ID" value="ENSPANG00000006403.3"/>
</dbReference>
<dbReference type="GeneID" id="100126663"/>
<dbReference type="KEGG" id="panu:100126663"/>
<dbReference type="CTD" id="4023"/>
<dbReference type="eggNOG" id="ENOG502QQ7P">
    <property type="taxonomic scope" value="Eukaryota"/>
</dbReference>
<dbReference type="GeneTree" id="ENSGT00940000157178"/>
<dbReference type="OrthoDB" id="3846at314294"/>
<dbReference type="Proteomes" id="UP000028761">
    <property type="component" value="Chromosome 8"/>
</dbReference>
<dbReference type="Bgee" id="ENSPANG00000006403">
    <property type="expression patterns" value="Expressed in white adipose tissue and 65 other cell types or tissues"/>
</dbReference>
<dbReference type="GO" id="GO:0042627">
    <property type="term" value="C:chylomicron"/>
    <property type="evidence" value="ECO:0007669"/>
    <property type="project" value="UniProtKB-KW"/>
</dbReference>
<dbReference type="GO" id="GO:0005615">
    <property type="term" value="C:extracellular space"/>
    <property type="evidence" value="ECO:0000250"/>
    <property type="project" value="UniProtKB"/>
</dbReference>
<dbReference type="GO" id="GO:0005886">
    <property type="term" value="C:plasma membrane"/>
    <property type="evidence" value="ECO:0007669"/>
    <property type="project" value="UniProtKB-SubCell"/>
</dbReference>
<dbReference type="GO" id="GO:0034361">
    <property type="term" value="C:very-low-density lipoprotein particle"/>
    <property type="evidence" value="ECO:0007669"/>
    <property type="project" value="UniProtKB-KW"/>
</dbReference>
<dbReference type="GO" id="GO:0034185">
    <property type="term" value="F:apolipoprotein binding"/>
    <property type="evidence" value="ECO:0007669"/>
    <property type="project" value="TreeGrafter"/>
</dbReference>
<dbReference type="GO" id="GO:0043395">
    <property type="term" value="F:heparan sulfate proteoglycan binding"/>
    <property type="evidence" value="ECO:0000250"/>
    <property type="project" value="UniProtKB"/>
</dbReference>
<dbReference type="GO" id="GO:0008201">
    <property type="term" value="F:heparin binding"/>
    <property type="evidence" value="ECO:0000250"/>
    <property type="project" value="UniProtKB"/>
</dbReference>
<dbReference type="GO" id="GO:0004465">
    <property type="term" value="F:lipoprotein lipase activity"/>
    <property type="evidence" value="ECO:0000250"/>
    <property type="project" value="UniProtKB"/>
</dbReference>
<dbReference type="GO" id="GO:0071813">
    <property type="term" value="F:lipoprotein particle binding"/>
    <property type="evidence" value="ECO:0000250"/>
    <property type="project" value="UniProtKB"/>
</dbReference>
<dbReference type="GO" id="GO:0046872">
    <property type="term" value="F:metal ion binding"/>
    <property type="evidence" value="ECO:0007669"/>
    <property type="project" value="UniProtKB-KW"/>
</dbReference>
<dbReference type="GO" id="GO:0008970">
    <property type="term" value="F:phospholipase A1 activity"/>
    <property type="evidence" value="ECO:0000250"/>
    <property type="project" value="UniProtKB"/>
</dbReference>
<dbReference type="GO" id="GO:0004806">
    <property type="term" value="F:triacylglycerol lipase activity"/>
    <property type="evidence" value="ECO:0000250"/>
    <property type="project" value="UniProtKB"/>
</dbReference>
<dbReference type="GO" id="GO:0034371">
    <property type="term" value="P:chylomicron remodeling"/>
    <property type="evidence" value="ECO:0000250"/>
    <property type="project" value="UniProtKB"/>
</dbReference>
<dbReference type="GO" id="GO:0006631">
    <property type="term" value="P:fatty acid metabolic process"/>
    <property type="evidence" value="ECO:0000250"/>
    <property type="project" value="UniProtKB"/>
</dbReference>
<dbReference type="GO" id="GO:0009749">
    <property type="term" value="P:response to glucose"/>
    <property type="evidence" value="ECO:0000250"/>
    <property type="project" value="AgBase"/>
</dbReference>
<dbReference type="GO" id="GO:0019433">
    <property type="term" value="P:triglyceride catabolic process"/>
    <property type="evidence" value="ECO:0000250"/>
    <property type="project" value="UniProtKB"/>
</dbReference>
<dbReference type="GO" id="GO:0034372">
    <property type="term" value="P:very-low-density lipoprotein particle remodeling"/>
    <property type="evidence" value="ECO:0007669"/>
    <property type="project" value="TreeGrafter"/>
</dbReference>
<dbReference type="CDD" id="cd00707">
    <property type="entry name" value="Pancreat_lipase_like"/>
    <property type="match status" value="1"/>
</dbReference>
<dbReference type="CDD" id="cd01758">
    <property type="entry name" value="PLAT_LPL"/>
    <property type="match status" value="1"/>
</dbReference>
<dbReference type="FunFam" id="2.60.60.20:FF:000006">
    <property type="entry name" value="Lipoprotein lipase"/>
    <property type="match status" value="1"/>
</dbReference>
<dbReference type="FunFam" id="3.40.50.1820:FF:000031">
    <property type="entry name" value="Lipoprotein lipase"/>
    <property type="match status" value="1"/>
</dbReference>
<dbReference type="Gene3D" id="3.40.50.1820">
    <property type="entry name" value="alpha/beta hydrolase"/>
    <property type="match status" value="1"/>
</dbReference>
<dbReference type="Gene3D" id="2.60.60.20">
    <property type="entry name" value="PLAT/LH2 domain"/>
    <property type="match status" value="1"/>
</dbReference>
<dbReference type="InterPro" id="IPR029058">
    <property type="entry name" value="AB_hydrolase_fold"/>
</dbReference>
<dbReference type="InterPro" id="IPR013818">
    <property type="entry name" value="Lipase"/>
</dbReference>
<dbReference type="InterPro" id="IPR016272">
    <property type="entry name" value="Lipase_LIPH"/>
</dbReference>
<dbReference type="InterPro" id="IPR033906">
    <property type="entry name" value="Lipase_N"/>
</dbReference>
<dbReference type="InterPro" id="IPR002330">
    <property type="entry name" value="Lipo_Lipase"/>
</dbReference>
<dbReference type="InterPro" id="IPR001024">
    <property type="entry name" value="PLAT/LH2_dom"/>
</dbReference>
<dbReference type="InterPro" id="IPR036392">
    <property type="entry name" value="PLAT/LH2_dom_sf"/>
</dbReference>
<dbReference type="InterPro" id="IPR000734">
    <property type="entry name" value="TAG_lipase"/>
</dbReference>
<dbReference type="NCBIfam" id="TIGR03230">
    <property type="entry name" value="lipo_lipase"/>
    <property type="match status" value="1"/>
</dbReference>
<dbReference type="PANTHER" id="PTHR11610">
    <property type="entry name" value="LIPASE"/>
    <property type="match status" value="1"/>
</dbReference>
<dbReference type="PANTHER" id="PTHR11610:SF3">
    <property type="entry name" value="LIPOPROTEIN LIPASE"/>
    <property type="match status" value="1"/>
</dbReference>
<dbReference type="Pfam" id="PF00151">
    <property type="entry name" value="Lipase"/>
    <property type="match status" value="1"/>
</dbReference>
<dbReference type="Pfam" id="PF01477">
    <property type="entry name" value="PLAT"/>
    <property type="match status" value="1"/>
</dbReference>
<dbReference type="PIRSF" id="PIRSF000865">
    <property type="entry name" value="Lipoprotein_lipase_LIPH"/>
    <property type="match status" value="1"/>
</dbReference>
<dbReference type="PRINTS" id="PR00822">
    <property type="entry name" value="LIPOLIPASE"/>
</dbReference>
<dbReference type="PRINTS" id="PR00821">
    <property type="entry name" value="TAGLIPASE"/>
</dbReference>
<dbReference type="SMART" id="SM00308">
    <property type="entry name" value="LH2"/>
    <property type="match status" value="1"/>
</dbReference>
<dbReference type="SUPFAM" id="SSF53474">
    <property type="entry name" value="alpha/beta-Hydrolases"/>
    <property type="match status" value="1"/>
</dbReference>
<dbReference type="SUPFAM" id="SSF49723">
    <property type="entry name" value="Lipase/lipooxygenase domain (PLAT/LH2 domain)"/>
    <property type="match status" value="1"/>
</dbReference>
<dbReference type="PROSITE" id="PS00120">
    <property type="entry name" value="LIPASE_SER"/>
    <property type="match status" value="1"/>
</dbReference>
<dbReference type="PROSITE" id="PS50095">
    <property type="entry name" value="PLAT"/>
    <property type="match status" value="1"/>
</dbReference>
<sequence>MESKALLLLALAVWLQSLTASRGGVAAADQRRDFIDIESKFALRTPEDTAEDTCHLIPGVAESVATCHFNHSSKTFMVIHGWTVTGMYESWVPKLVAALYKREPDSNVIVVDWLSRAQQHYPVSAGYTKLVGQDVARFINWMEEEFNYPLDNVHLLGYSLGAHAAGIAGSLTNKKVNRITGLDPAGPNFEYAEAPSRLSPDDADFVDVLHTFTRGSPGRSIGIQKPVGHVDIYPNGGTFQPGCNIGEAIRVIAERGLGDVDQLVKCSHERSIHLFIDSLLNEENPSKAYRCSSKEAFEKGLCLSCRKNRCNNLGYEINKVRAKRSSKMYLKTRSQMPYKVFHYQVKIHFSGTESETHTNQAFEISLYGTVAESENIPFTLPEVSTNKTYSFLIYTEVDIGELLMLKLKWKSDSYFSWSDWWSSPGFAIQKIRVKAGETQKKVIFCSREKVSHLQKGKAPAVFVKCHDKSLNKKSG</sequence>
<evidence type="ECO:0000250" key="1"/>
<evidence type="ECO:0000250" key="2">
    <source>
        <dbReference type="UniProtKB" id="P06858"/>
    </source>
</evidence>
<evidence type="ECO:0000250" key="3">
    <source>
        <dbReference type="UniProtKB" id="P11151"/>
    </source>
</evidence>
<evidence type="ECO:0000250" key="4">
    <source>
        <dbReference type="UniProtKB" id="Q06000"/>
    </source>
</evidence>
<evidence type="ECO:0000255" key="5"/>
<evidence type="ECO:0000255" key="6">
    <source>
        <dbReference type="PROSITE-ProRule" id="PRU00152"/>
    </source>
</evidence>
<evidence type="ECO:0000269" key="7">
    <source>
    </source>
</evidence>
<evidence type="ECO:0000305" key="8"/>
<keyword id="KW-0106">Calcium</keyword>
<keyword id="KW-1003">Cell membrane</keyword>
<keyword id="KW-0162">Chylomicron</keyword>
<keyword id="KW-1015">Disulfide bond</keyword>
<keyword id="KW-0272">Extracellular matrix</keyword>
<keyword id="KW-0325">Glycoprotein</keyword>
<keyword id="KW-0358">Heparin-binding</keyword>
<keyword id="KW-0378">Hydrolase</keyword>
<keyword id="KW-0442">Lipid degradation</keyword>
<keyword id="KW-0443">Lipid metabolism</keyword>
<keyword id="KW-0472">Membrane</keyword>
<keyword id="KW-0479">Metal-binding</keyword>
<keyword id="KW-0944">Nitration</keyword>
<keyword id="KW-1185">Reference proteome</keyword>
<keyword id="KW-0964">Secreted</keyword>
<keyword id="KW-0732">Signal</keyword>
<keyword id="KW-0850">VLDL</keyword>
<proteinExistence type="evidence at transcript level"/>
<name>LIPL_PAPAN</name>